<comment type="function">
    <text>This protein called 'barrier activity' is excreted by yeast cells mating type a. It is probably a protease that cleaves alpha-factor and thus acts as an antagonist of this mating pheromone and establishes optimal pheromone concentration for conjugation.</text>
</comment>
<comment type="catalytic activity">
    <reaction>
        <text>Selective cleavage of 6-Leu-|-Lys-7 bond in the pheromone alpha-mating factor.</text>
        <dbReference type="EC" id="3.4.23.35"/>
    </reaction>
</comment>
<comment type="subcellular location">
    <subcellularLocation>
        <location>Secreted</location>
    </subcellularLocation>
</comment>
<comment type="induction">
    <text>By alpha factor.</text>
</comment>
<comment type="miscellaneous">
    <text>It is found only in a mating type cells.</text>
</comment>
<comment type="miscellaneous">
    <text evidence="6">Present with 672 molecules/cell in log phase SD medium.</text>
</comment>
<comment type="similarity">
    <text evidence="7">Belongs to the peptidase A1 family.</text>
</comment>
<name>BAR1_YEAST</name>
<gene>
    <name type="primary">BAR1</name>
    <name type="synonym">SST1</name>
    <name type="ordered locus">YIL015W</name>
</gene>
<keyword id="KW-0064">Aspartyl protease</keyword>
<keyword id="KW-1015">Disulfide bond</keyword>
<keyword id="KW-0325">Glycoprotein</keyword>
<keyword id="KW-0378">Hydrolase</keyword>
<keyword id="KW-0589">Pheromone response</keyword>
<keyword id="KW-0645">Protease</keyword>
<keyword id="KW-1185">Reference proteome</keyword>
<keyword id="KW-0964">Secreted</keyword>
<keyword id="KW-0732">Signal</keyword>
<feature type="signal peptide">
    <location>
        <begin position="1"/>
        <end position="24"/>
    </location>
</feature>
<feature type="chain" id="PRO_0000025834" description="Barrierpepsin">
    <location>
        <begin position="25"/>
        <end position="587"/>
    </location>
</feature>
<feature type="domain" description="Peptidase A1" evidence="3">
    <location>
        <begin position="45"/>
        <end position="393"/>
    </location>
</feature>
<feature type="region of interest" description="Disordered" evidence="5">
    <location>
        <begin position="466"/>
        <end position="505"/>
    </location>
</feature>
<feature type="active site" evidence="4">
    <location>
        <position position="63"/>
    </location>
</feature>
<feature type="active site" evidence="4">
    <location>
        <position position="287"/>
    </location>
</feature>
<feature type="glycosylation site" description="N-linked (GlcNAc...) asparagine" evidence="2">
    <location>
        <position position="84"/>
    </location>
</feature>
<feature type="glycosylation site" description="N-linked (GlcNAc...) asparagine" evidence="2">
    <location>
        <position position="90"/>
    </location>
</feature>
<feature type="glycosylation site" description="N-linked (GlcNAc...) asparagine" evidence="2">
    <location>
        <position position="268"/>
    </location>
</feature>
<feature type="glycosylation site" description="N-linked (GlcNAc...) asparagine" evidence="2">
    <location>
        <position position="308"/>
    </location>
</feature>
<feature type="glycosylation site" description="N-linked (GlcNAc...) asparagine" evidence="2">
    <location>
        <position position="366"/>
    </location>
</feature>
<feature type="glycosylation site" description="N-linked (GlcNAc...) asparagine" evidence="2">
    <location>
        <position position="398"/>
    </location>
</feature>
<feature type="glycosylation site" description="N-linked (GlcNAc...) asparagine" evidence="2">
    <location>
        <position position="468"/>
    </location>
</feature>
<feature type="glycosylation site" description="N-linked (GlcNAc...) asparagine" evidence="2">
    <location>
        <position position="503"/>
    </location>
</feature>
<feature type="glycosylation site" description="N-linked (GlcNAc...) asparagine" evidence="2">
    <location>
        <position position="551"/>
    </location>
</feature>
<feature type="disulfide bond" evidence="1">
    <location>
        <begin position="322"/>
        <end position="358"/>
    </location>
</feature>
<organism>
    <name type="scientific">Saccharomyces cerevisiae (strain ATCC 204508 / S288c)</name>
    <name type="common">Baker's yeast</name>
    <dbReference type="NCBI Taxonomy" id="559292"/>
    <lineage>
        <taxon>Eukaryota</taxon>
        <taxon>Fungi</taxon>
        <taxon>Dikarya</taxon>
        <taxon>Ascomycota</taxon>
        <taxon>Saccharomycotina</taxon>
        <taxon>Saccharomycetes</taxon>
        <taxon>Saccharomycetales</taxon>
        <taxon>Saccharomycetaceae</taxon>
        <taxon>Saccharomyces</taxon>
    </lineage>
</organism>
<sequence>MSAINHLCLKLILASFAIINTITALTNDGTGHLEFLLQHEEEMYYATTLDIGTPSQSLTVLFDTGSADFWVMDSSNPFCLPNSNTSSYSNATYNGEEVKPSIDCRSMSTYNEHRSSTYQYLENGRFYITYADGTFADGSWGTETVSINGIDIPNIQFGVAKYATTPVSGVLGIGFPRRESVKGYEGAPNEYYPNFPQILKSEKIIDVVAYSLFLNSPDSGTGSIVFGAIDESKFSGDLFTFPMVNEYPTIVDAPATLAMTIQGLGAQNKSSCEHETFTTTKYPVLLDSGTSLLNAPKVIADKMASFVNASYSEEEGIYILDCPVSVGDVEYNFDFGDLQISVPLSSLILSPETEGSYCGFAVQPTNDSMVLGDVFLSSAYVVFDLDNYKISLAQANWNASEVSKKLVNIQTDGSISGAKIATAEPWSTNEPFTVTSDIYSSTGCKSRPFLQSSTASSLIAETNVQSRNCSTKMPGTRSTTVLSKPTQNSAMHQSTGAVTQTSNETKLELSSTMANSGSVSLPTSNSIDKEFEHSKSQTTSDPSVAEHSTFNQTFVHETKYRPTHKTVITETVTKYSTVLINVCKPTY</sequence>
<reference key="1">
    <citation type="journal article" date="1988" name="Proc. Natl. Acad. Sci. U.S.A.">
        <title>The Saccharomyces cerevisiae BAR1 gene encodes an exported protein with homology to pepsin.</title>
        <authorList>
            <person name="Mackay V.L."/>
            <person name="Welch S.K."/>
            <person name="Insley M.Y."/>
            <person name="Manney T.R."/>
            <person name="Holly J."/>
            <person name="Saari G.C."/>
            <person name="Parker M.L."/>
        </authorList>
    </citation>
    <scope>NUCLEOTIDE SEQUENCE [GENOMIC DNA]</scope>
</reference>
<reference key="2">
    <citation type="journal article" date="1997" name="Nature">
        <title>The nucleotide sequence of Saccharomyces cerevisiae chromosome IX.</title>
        <authorList>
            <person name="Churcher C.M."/>
            <person name="Bowman S."/>
            <person name="Badcock K."/>
            <person name="Bankier A.T."/>
            <person name="Brown D."/>
            <person name="Chillingworth T."/>
            <person name="Connor R."/>
            <person name="Devlin K."/>
            <person name="Gentles S."/>
            <person name="Hamlin N."/>
            <person name="Harris D.E."/>
            <person name="Horsnell T."/>
            <person name="Hunt S."/>
            <person name="Jagels K."/>
            <person name="Jones M."/>
            <person name="Lye G."/>
            <person name="Moule S."/>
            <person name="Odell C."/>
            <person name="Pearson D."/>
            <person name="Rajandream M.A."/>
            <person name="Rice P."/>
            <person name="Rowley N."/>
            <person name="Skelton J."/>
            <person name="Smith V."/>
            <person name="Walsh S.V."/>
            <person name="Whitehead S."/>
            <person name="Barrell B.G."/>
        </authorList>
    </citation>
    <scope>NUCLEOTIDE SEQUENCE [LARGE SCALE GENOMIC DNA]</scope>
    <source>
        <strain>ATCC 204508 / S288c</strain>
    </source>
</reference>
<reference key="3">
    <citation type="journal article" date="2014" name="G3 (Bethesda)">
        <title>The reference genome sequence of Saccharomyces cerevisiae: Then and now.</title>
        <authorList>
            <person name="Engel S.R."/>
            <person name="Dietrich F.S."/>
            <person name="Fisk D.G."/>
            <person name="Binkley G."/>
            <person name="Balakrishnan R."/>
            <person name="Costanzo M.C."/>
            <person name="Dwight S.S."/>
            <person name="Hitz B.C."/>
            <person name="Karra K."/>
            <person name="Nash R.S."/>
            <person name="Weng S."/>
            <person name="Wong E.D."/>
            <person name="Lloyd P."/>
            <person name="Skrzypek M.S."/>
            <person name="Miyasato S.R."/>
            <person name="Simison M."/>
            <person name="Cherry J.M."/>
        </authorList>
    </citation>
    <scope>GENOME REANNOTATION</scope>
    <source>
        <strain>ATCC 204508 / S288c</strain>
    </source>
</reference>
<reference key="4">
    <citation type="journal article" date="2003" name="Nature">
        <title>Global analysis of protein expression in yeast.</title>
        <authorList>
            <person name="Ghaemmaghami S."/>
            <person name="Huh W.-K."/>
            <person name="Bower K."/>
            <person name="Howson R.W."/>
            <person name="Belle A."/>
            <person name="Dephoure N."/>
            <person name="O'Shea E.K."/>
            <person name="Weissman J.S."/>
        </authorList>
    </citation>
    <scope>LEVEL OF PROTEIN EXPRESSION [LARGE SCALE ANALYSIS]</scope>
</reference>
<protein>
    <recommendedName>
        <fullName>Barrierpepsin</fullName>
        <ecNumber>3.4.23.35</ecNumber>
    </recommendedName>
    <alternativeName>
        <fullName>BAR proteinase</fullName>
    </alternativeName>
    <alternativeName>
        <fullName>Extracellular 'barrier' protein</fullName>
    </alternativeName>
</protein>
<accession>P12630</accession>
<accession>D6VVR4</accession>
<evidence type="ECO:0000250" key="1"/>
<evidence type="ECO:0000255" key="2"/>
<evidence type="ECO:0000255" key="3">
    <source>
        <dbReference type="PROSITE-ProRule" id="PRU01103"/>
    </source>
</evidence>
<evidence type="ECO:0000255" key="4">
    <source>
        <dbReference type="PROSITE-ProRule" id="PRU10094"/>
    </source>
</evidence>
<evidence type="ECO:0000256" key="5">
    <source>
        <dbReference type="SAM" id="MobiDB-lite"/>
    </source>
</evidence>
<evidence type="ECO:0000269" key="6">
    <source>
    </source>
</evidence>
<evidence type="ECO:0000305" key="7"/>
<dbReference type="EC" id="3.4.23.35"/>
<dbReference type="EMBL" id="Z46881">
    <property type="protein sequence ID" value="CAA86977.1"/>
    <property type="molecule type" value="Genomic_DNA"/>
</dbReference>
<dbReference type="EMBL" id="J03573">
    <property type="protein sequence ID" value="AAA34451.1"/>
    <property type="molecule type" value="Genomic_DNA"/>
</dbReference>
<dbReference type="EMBL" id="BK006942">
    <property type="protein sequence ID" value="DAA08530.1"/>
    <property type="molecule type" value="Genomic_DNA"/>
</dbReference>
<dbReference type="PIR" id="A34084">
    <property type="entry name" value="A34084"/>
</dbReference>
<dbReference type="RefSeq" id="NP_012249.1">
    <property type="nucleotide sequence ID" value="NM_001179365.1"/>
</dbReference>
<dbReference type="SMR" id="P12630"/>
<dbReference type="BioGRID" id="34973">
    <property type="interactions" value="98"/>
</dbReference>
<dbReference type="FunCoup" id="P12630">
    <property type="interactions" value="268"/>
</dbReference>
<dbReference type="IntAct" id="P12630">
    <property type="interactions" value="4"/>
</dbReference>
<dbReference type="MINT" id="P12630"/>
<dbReference type="STRING" id="4932.YIL015W"/>
<dbReference type="MEROPS" id="A01.015"/>
<dbReference type="GlyCosmos" id="P12630">
    <property type="glycosylation" value="9 sites, No reported glycans"/>
</dbReference>
<dbReference type="GlyGen" id="P12630">
    <property type="glycosylation" value="9 sites"/>
</dbReference>
<dbReference type="PaxDb" id="4932-YIL015W"/>
<dbReference type="PeptideAtlas" id="P12630"/>
<dbReference type="EnsemblFungi" id="YIL015W_mRNA">
    <property type="protein sequence ID" value="YIL015W"/>
    <property type="gene ID" value="YIL015W"/>
</dbReference>
<dbReference type="GeneID" id="854797"/>
<dbReference type="KEGG" id="sce:YIL015W"/>
<dbReference type="AGR" id="SGD:S000001277"/>
<dbReference type="SGD" id="S000001277">
    <property type="gene designation" value="BAR1"/>
</dbReference>
<dbReference type="VEuPathDB" id="FungiDB:YIL015W"/>
<dbReference type="eggNOG" id="KOG1339">
    <property type="taxonomic scope" value="Eukaryota"/>
</dbReference>
<dbReference type="GeneTree" id="ENSGT00940000166661"/>
<dbReference type="HOGENOM" id="CLU_013253_9_1_1"/>
<dbReference type="InParanoid" id="P12630"/>
<dbReference type="OMA" id="CMFGISP"/>
<dbReference type="OrthoDB" id="771136at2759"/>
<dbReference type="BioCyc" id="YEAST:G3O-31291-MONOMER"/>
<dbReference type="BioGRID-ORCS" id="854797">
    <property type="hits" value="2 hits in 10 CRISPR screens"/>
</dbReference>
<dbReference type="PRO" id="PR:P12630"/>
<dbReference type="Proteomes" id="UP000002311">
    <property type="component" value="Chromosome IX"/>
</dbReference>
<dbReference type="RNAct" id="P12630">
    <property type="molecule type" value="protein"/>
</dbReference>
<dbReference type="GO" id="GO:0071944">
    <property type="term" value="C:cell periphery"/>
    <property type="evidence" value="ECO:0007005"/>
    <property type="project" value="SGD"/>
</dbReference>
<dbReference type="GO" id="GO:0005576">
    <property type="term" value="C:extracellular region"/>
    <property type="evidence" value="ECO:0000314"/>
    <property type="project" value="SGD"/>
</dbReference>
<dbReference type="GO" id="GO:0009277">
    <property type="term" value="C:fungal-type cell wall"/>
    <property type="evidence" value="ECO:0000314"/>
    <property type="project" value="SGD"/>
</dbReference>
<dbReference type="GO" id="GO:0004190">
    <property type="term" value="F:aspartic-type endopeptidase activity"/>
    <property type="evidence" value="ECO:0000314"/>
    <property type="project" value="SGD"/>
</dbReference>
<dbReference type="GO" id="GO:0071444">
    <property type="term" value="P:cellular response to pheromone"/>
    <property type="evidence" value="ECO:0000314"/>
    <property type="project" value="SGD"/>
</dbReference>
<dbReference type="GO" id="GO:0000747">
    <property type="term" value="P:conjugation with cellular fusion"/>
    <property type="evidence" value="ECO:0000314"/>
    <property type="project" value="SGD"/>
</dbReference>
<dbReference type="GO" id="GO:0031505">
    <property type="term" value="P:fungal-type cell wall organization"/>
    <property type="evidence" value="ECO:0000318"/>
    <property type="project" value="GO_Central"/>
</dbReference>
<dbReference type="GO" id="GO:0043171">
    <property type="term" value="P:peptide catabolic process"/>
    <property type="evidence" value="ECO:0000314"/>
    <property type="project" value="SGD"/>
</dbReference>
<dbReference type="GO" id="GO:0006508">
    <property type="term" value="P:proteolysis"/>
    <property type="evidence" value="ECO:0007669"/>
    <property type="project" value="UniProtKB-KW"/>
</dbReference>
<dbReference type="CDD" id="cd05474">
    <property type="entry name" value="SAP_like"/>
    <property type="match status" value="1"/>
</dbReference>
<dbReference type="FunFam" id="2.40.70.10:FF:000011">
    <property type="entry name" value="Aspartic protease"/>
    <property type="match status" value="1"/>
</dbReference>
<dbReference type="FunFam" id="2.40.70.10:FF:000023">
    <property type="entry name" value="Aspartic protease"/>
    <property type="match status" value="1"/>
</dbReference>
<dbReference type="Gene3D" id="2.40.70.10">
    <property type="entry name" value="Acid Proteases"/>
    <property type="match status" value="2"/>
</dbReference>
<dbReference type="InterPro" id="IPR001461">
    <property type="entry name" value="Aspartic_peptidase_A1"/>
</dbReference>
<dbReference type="InterPro" id="IPR001969">
    <property type="entry name" value="Aspartic_peptidase_AS"/>
</dbReference>
<dbReference type="InterPro" id="IPR033121">
    <property type="entry name" value="PEPTIDASE_A1"/>
</dbReference>
<dbReference type="InterPro" id="IPR021109">
    <property type="entry name" value="Peptidase_aspartic_dom_sf"/>
</dbReference>
<dbReference type="InterPro" id="IPR033876">
    <property type="entry name" value="SAP-like"/>
</dbReference>
<dbReference type="PANTHER" id="PTHR47966:SF65">
    <property type="entry name" value="ASPARTIC-TYPE ENDOPEPTIDASE"/>
    <property type="match status" value="1"/>
</dbReference>
<dbReference type="PANTHER" id="PTHR47966">
    <property type="entry name" value="BETA-SITE APP-CLEAVING ENZYME, ISOFORM A-RELATED"/>
    <property type="match status" value="1"/>
</dbReference>
<dbReference type="Pfam" id="PF00026">
    <property type="entry name" value="Asp"/>
    <property type="match status" value="1"/>
</dbReference>
<dbReference type="PRINTS" id="PR00792">
    <property type="entry name" value="PEPSIN"/>
</dbReference>
<dbReference type="SUPFAM" id="SSF50630">
    <property type="entry name" value="Acid proteases"/>
    <property type="match status" value="1"/>
</dbReference>
<dbReference type="PROSITE" id="PS00141">
    <property type="entry name" value="ASP_PROTEASE"/>
    <property type="match status" value="2"/>
</dbReference>
<dbReference type="PROSITE" id="PS51767">
    <property type="entry name" value="PEPTIDASE_A1"/>
    <property type="match status" value="1"/>
</dbReference>
<proteinExistence type="evidence at protein level"/>